<reference key="1">
    <citation type="journal article" date="1994" name="Genomics">
        <title>Isolation and characterization of mouse Xrcc-1, a DNA repair gene affecting ligation.</title>
        <authorList>
            <person name="Brookman K.W."/>
            <person name="Tebbs R.S."/>
            <person name="Allen S.A."/>
            <person name="Tucker J.D."/>
            <person name="Swiger R.R."/>
            <person name="Lamerdin J.E."/>
            <person name="Carrano A.V."/>
            <person name="Thompson L.H."/>
        </authorList>
    </citation>
    <scope>NUCLEOTIDE SEQUENCE [MRNA]</scope>
    <source>
        <tissue>Brain</tissue>
    </source>
</reference>
<reference key="2">
    <citation type="journal article" date="2005" name="Science">
        <title>The transcriptional landscape of the mammalian genome.</title>
        <authorList>
            <person name="Carninci P."/>
            <person name="Kasukawa T."/>
            <person name="Katayama S."/>
            <person name="Gough J."/>
            <person name="Frith M.C."/>
            <person name="Maeda N."/>
            <person name="Oyama R."/>
            <person name="Ravasi T."/>
            <person name="Lenhard B."/>
            <person name="Wells C."/>
            <person name="Kodzius R."/>
            <person name="Shimokawa K."/>
            <person name="Bajic V.B."/>
            <person name="Brenner S.E."/>
            <person name="Batalov S."/>
            <person name="Forrest A.R."/>
            <person name="Zavolan M."/>
            <person name="Davis M.J."/>
            <person name="Wilming L.G."/>
            <person name="Aidinis V."/>
            <person name="Allen J.E."/>
            <person name="Ambesi-Impiombato A."/>
            <person name="Apweiler R."/>
            <person name="Aturaliya R.N."/>
            <person name="Bailey T.L."/>
            <person name="Bansal M."/>
            <person name="Baxter L."/>
            <person name="Beisel K.W."/>
            <person name="Bersano T."/>
            <person name="Bono H."/>
            <person name="Chalk A.M."/>
            <person name="Chiu K.P."/>
            <person name="Choudhary V."/>
            <person name="Christoffels A."/>
            <person name="Clutterbuck D.R."/>
            <person name="Crowe M.L."/>
            <person name="Dalla E."/>
            <person name="Dalrymple B.P."/>
            <person name="de Bono B."/>
            <person name="Della Gatta G."/>
            <person name="di Bernardo D."/>
            <person name="Down T."/>
            <person name="Engstrom P."/>
            <person name="Fagiolini M."/>
            <person name="Faulkner G."/>
            <person name="Fletcher C.F."/>
            <person name="Fukushima T."/>
            <person name="Furuno M."/>
            <person name="Futaki S."/>
            <person name="Gariboldi M."/>
            <person name="Georgii-Hemming P."/>
            <person name="Gingeras T.R."/>
            <person name="Gojobori T."/>
            <person name="Green R.E."/>
            <person name="Gustincich S."/>
            <person name="Harbers M."/>
            <person name="Hayashi Y."/>
            <person name="Hensch T.K."/>
            <person name="Hirokawa N."/>
            <person name="Hill D."/>
            <person name="Huminiecki L."/>
            <person name="Iacono M."/>
            <person name="Ikeo K."/>
            <person name="Iwama A."/>
            <person name="Ishikawa T."/>
            <person name="Jakt M."/>
            <person name="Kanapin A."/>
            <person name="Katoh M."/>
            <person name="Kawasawa Y."/>
            <person name="Kelso J."/>
            <person name="Kitamura H."/>
            <person name="Kitano H."/>
            <person name="Kollias G."/>
            <person name="Krishnan S.P."/>
            <person name="Kruger A."/>
            <person name="Kummerfeld S.K."/>
            <person name="Kurochkin I.V."/>
            <person name="Lareau L.F."/>
            <person name="Lazarevic D."/>
            <person name="Lipovich L."/>
            <person name="Liu J."/>
            <person name="Liuni S."/>
            <person name="McWilliam S."/>
            <person name="Madan Babu M."/>
            <person name="Madera M."/>
            <person name="Marchionni L."/>
            <person name="Matsuda H."/>
            <person name="Matsuzawa S."/>
            <person name="Miki H."/>
            <person name="Mignone F."/>
            <person name="Miyake S."/>
            <person name="Morris K."/>
            <person name="Mottagui-Tabar S."/>
            <person name="Mulder N."/>
            <person name="Nakano N."/>
            <person name="Nakauchi H."/>
            <person name="Ng P."/>
            <person name="Nilsson R."/>
            <person name="Nishiguchi S."/>
            <person name="Nishikawa S."/>
            <person name="Nori F."/>
            <person name="Ohara O."/>
            <person name="Okazaki Y."/>
            <person name="Orlando V."/>
            <person name="Pang K.C."/>
            <person name="Pavan W.J."/>
            <person name="Pavesi G."/>
            <person name="Pesole G."/>
            <person name="Petrovsky N."/>
            <person name="Piazza S."/>
            <person name="Reed J."/>
            <person name="Reid J.F."/>
            <person name="Ring B.Z."/>
            <person name="Ringwald M."/>
            <person name="Rost B."/>
            <person name="Ruan Y."/>
            <person name="Salzberg S.L."/>
            <person name="Sandelin A."/>
            <person name="Schneider C."/>
            <person name="Schoenbach C."/>
            <person name="Sekiguchi K."/>
            <person name="Semple C.A."/>
            <person name="Seno S."/>
            <person name="Sessa L."/>
            <person name="Sheng Y."/>
            <person name="Shibata Y."/>
            <person name="Shimada H."/>
            <person name="Shimada K."/>
            <person name="Silva D."/>
            <person name="Sinclair B."/>
            <person name="Sperling S."/>
            <person name="Stupka E."/>
            <person name="Sugiura K."/>
            <person name="Sultana R."/>
            <person name="Takenaka Y."/>
            <person name="Taki K."/>
            <person name="Tammoja K."/>
            <person name="Tan S.L."/>
            <person name="Tang S."/>
            <person name="Taylor M.S."/>
            <person name="Tegner J."/>
            <person name="Teichmann S.A."/>
            <person name="Ueda H.R."/>
            <person name="van Nimwegen E."/>
            <person name="Verardo R."/>
            <person name="Wei C.L."/>
            <person name="Yagi K."/>
            <person name="Yamanishi H."/>
            <person name="Zabarovsky E."/>
            <person name="Zhu S."/>
            <person name="Zimmer A."/>
            <person name="Hide W."/>
            <person name="Bult C."/>
            <person name="Grimmond S.M."/>
            <person name="Teasdale R.D."/>
            <person name="Liu E.T."/>
            <person name="Brusic V."/>
            <person name="Quackenbush J."/>
            <person name="Wahlestedt C."/>
            <person name="Mattick J.S."/>
            <person name="Hume D.A."/>
            <person name="Kai C."/>
            <person name="Sasaki D."/>
            <person name="Tomaru Y."/>
            <person name="Fukuda S."/>
            <person name="Kanamori-Katayama M."/>
            <person name="Suzuki M."/>
            <person name="Aoki J."/>
            <person name="Arakawa T."/>
            <person name="Iida J."/>
            <person name="Imamura K."/>
            <person name="Itoh M."/>
            <person name="Kato T."/>
            <person name="Kawaji H."/>
            <person name="Kawagashira N."/>
            <person name="Kawashima T."/>
            <person name="Kojima M."/>
            <person name="Kondo S."/>
            <person name="Konno H."/>
            <person name="Nakano K."/>
            <person name="Ninomiya N."/>
            <person name="Nishio T."/>
            <person name="Okada M."/>
            <person name="Plessy C."/>
            <person name="Shibata K."/>
            <person name="Shiraki T."/>
            <person name="Suzuki S."/>
            <person name="Tagami M."/>
            <person name="Waki K."/>
            <person name="Watahiki A."/>
            <person name="Okamura-Oho Y."/>
            <person name="Suzuki H."/>
            <person name="Kawai J."/>
            <person name="Hayashizaki Y."/>
        </authorList>
    </citation>
    <scope>NUCLEOTIDE SEQUENCE [LARGE SCALE MRNA]</scope>
    <source>
        <strain>DBA/2J</strain>
    </source>
</reference>
<reference key="3">
    <citation type="journal article" date="2004" name="Genome Res.">
        <title>The status, quality, and expansion of the NIH full-length cDNA project: the Mammalian Gene Collection (MGC).</title>
        <authorList>
            <consortium name="The MGC Project Team"/>
        </authorList>
    </citation>
    <scope>NUCLEOTIDE SEQUENCE [LARGE SCALE MRNA]</scope>
    <source>
        <strain>C57BL/6J</strain>
        <strain>FVB/N</strain>
        <tissue>Colon</tissue>
        <tissue>Egg</tissue>
    </source>
</reference>
<reference key="4">
    <citation type="journal article" date="2007" name="Proc. Natl. Acad. Sci. U.S.A.">
        <title>Large-scale phosphorylation analysis of mouse liver.</title>
        <authorList>
            <person name="Villen J."/>
            <person name="Beausoleil S.A."/>
            <person name="Gerber S.A."/>
            <person name="Gygi S.P."/>
        </authorList>
    </citation>
    <scope>PHOSPHORYLATION [LARGE SCALE ANALYSIS] AT THR-452</scope>
    <scope>IDENTIFICATION BY MASS SPECTROMETRY [LARGE SCALE ANALYSIS]</scope>
    <source>
        <tissue>Liver</tissue>
    </source>
</reference>
<reference key="5">
    <citation type="journal article" date="2009" name="Mol. Cell. Proteomics">
        <title>Large scale localization of protein phosphorylation by use of electron capture dissociation mass spectrometry.</title>
        <authorList>
            <person name="Sweet S.M."/>
            <person name="Bailey C.M."/>
            <person name="Cunningham D.L."/>
            <person name="Heath J.K."/>
            <person name="Cooper H.J."/>
        </authorList>
    </citation>
    <scope>PHOSPHORYLATION [LARGE SCALE ANALYSIS] AT SER-446 AND THR-452</scope>
    <scope>IDENTIFICATION BY MASS SPECTROMETRY [LARGE SCALE ANALYSIS]</scope>
    <source>
        <tissue>Embryonic fibroblast</tissue>
    </source>
</reference>
<reference key="6">
    <citation type="journal article" date="2010" name="Cell">
        <title>A tissue-specific atlas of mouse protein phosphorylation and expression.</title>
        <authorList>
            <person name="Huttlin E.L."/>
            <person name="Jedrychowski M.P."/>
            <person name="Elias J.E."/>
            <person name="Goswami T."/>
            <person name="Rad R."/>
            <person name="Beausoleil S.A."/>
            <person name="Villen J."/>
            <person name="Haas W."/>
            <person name="Sowa M.E."/>
            <person name="Gygi S.P."/>
        </authorList>
    </citation>
    <scope>PHOSPHORYLATION [LARGE SCALE ANALYSIS] AT THR-452</scope>
    <scope>IDENTIFICATION BY MASS SPECTROMETRY [LARGE SCALE ANALYSIS]</scope>
    <source>
        <tissue>Brain</tissue>
        <tissue>Kidney</tissue>
        <tissue>Spleen</tissue>
        <tissue>Testis</tissue>
    </source>
</reference>
<reference key="7">
    <citation type="journal article" date="2017" name="Nature">
        <title>XRCC1 mutation is associated with PARP1 hyperactivation and cerebellar ataxia.</title>
        <authorList>
            <consortium name="Care4Rare Canada Consortium"/>
            <person name="Hoch N.C."/>
            <person name="Hanzlikova H."/>
            <person name="Rulten S.L."/>
            <person name="Tetreault M."/>
            <person name="Komulainen E."/>
            <person name="Ju L."/>
            <person name="Hornyak P."/>
            <person name="Zeng Z."/>
            <person name="Gittens W."/>
            <person name="Rey S.A."/>
            <person name="Staras K."/>
            <person name="Mancini G.M."/>
            <person name="McKinnon P.J."/>
            <person name="Wang Z.Q."/>
            <person name="Wagner J.D."/>
            <person name="Yoon G."/>
            <person name="Caldecott K.W."/>
        </authorList>
    </citation>
    <scope>FUNCTION</scope>
    <scope>DISRUPTION PHENOTYPE</scope>
</reference>
<dbReference type="EMBL" id="U02887">
    <property type="protein sequence ID" value="AAA93115.1"/>
    <property type="molecule type" value="mRNA"/>
</dbReference>
<dbReference type="EMBL" id="AK168334">
    <property type="protein sequence ID" value="BAE40272.1"/>
    <property type="molecule type" value="mRNA"/>
</dbReference>
<dbReference type="EMBL" id="BC055900">
    <property type="protein sequence ID" value="AAH55900.1"/>
    <property type="molecule type" value="mRNA"/>
</dbReference>
<dbReference type="EMBL" id="BC085281">
    <property type="protein sequence ID" value="AAH85281.1"/>
    <property type="molecule type" value="mRNA"/>
</dbReference>
<dbReference type="CCDS" id="CCDS20955.1"/>
<dbReference type="PIR" id="A54659">
    <property type="entry name" value="A54659"/>
</dbReference>
<dbReference type="RefSeq" id="NP_033558.3">
    <property type="nucleotide sequence ID" value="NM_009532.5"/>
</dbReference>
<dbReference type="RefSeq" id="XP_017177620.1">
    <property type="nucleotide sequence ID" value="XM_017322131.1"/>
</dbReference>
<dbReference type="PDB" id="3PC6">
    <property type="method" value="X-ray"/>
    <property type="resolution" value="1.90 A"/>
    <property type="chains" value="A/B=535-631"/>
</dbReference>
<dbReference type="PDB" id="3PC8">
    <property type="method" value="X-ray"/>
    <property type="resolution" value="2.31 A"/>
    <property type="chains" value="A/B=534-631"/>
</dbReference>
<dbReference type="PDB" id="3QVG">
    <property type="method" value="X-ray"/>
    <property type="resolution" value="2.26 A"/>
    <property type="chains" value="B/D=531-631"/>
</dbReference>
<dbReference type="PDBsum" id="3PC6"/>
<dbReference type="PDBsum" id="3PC8"/>
<dbReference type="PDBsum" id="3QVG"/>
<dbReference type="SMR" id="Q60596"/>
<dbReference type="BioGRID" id="204607">
    <property type="interactions" value="12"/>
</dbReference>
<dbReference type="FunCoup" id="Q60596">
    <property type="interactions" value="3595"/>
</dbReference>
<dbReference type="IntAct" id="Q60596">
    <property type="interactions" value="3"/>
</dbReference>
<dbReference type="MINT" id="Q60596"/>
<dbReference type="STRING" id="10090.ENSMUSP00000146105"/>
<dbReference type="GlyGen" id="Q60596">
    <property type="glycosylation" value="1 site"/>
</dbReference>
<dbReference type="iPTMnet" id="Q60596"/>
<dbReference type="PhosphoSitePlus" id="Q60596"/>
<dbReference type="jPOST" id="Q60596"/>
<dbReference type="PaxDb" id="10090-ENSMUSP00000070995"/>
<dbReference type="ProteomicsDB" id="297569"/>
<dbReference type="Pumba" id="Q60596"/>
<dbReference type="Antibodypedia" id="1863">
    <property type="antibodies" value="600 antibodies from 43 providers"/>
</dbReference>
<dbReference type="DNASU" id="22594"/>
<dbReference type="Ensembl" id="ENSMUST00000063249.9">
    <property type="protein sequence ID" value="ENSMUSP00000070995.9"/>
    <property type="gene ID" value="ENSMUSG00000051768.10"/>
</dbReference>
<dbReference type="Ensembl" id="ENSMUST00000205573.2">
    <property type="protein sequence ID" value="ENSMUSP00000146105.2"/>
    <property type="gene ID" value="ENSMUSG00000051768.10"/>
</dbReference>
<dbReference type="GeneID" id="22594"/>
<dbReference type="KEGG" id="mmu:22594"/>
<dbReference type="UCSC" id="uc009fpx.2">
    <property type="organism name" value="mouse"/>
</dbReference>
<dbReference type="AGR" id="MGI:99137"/>
<dbReference type="CTD" id="7515"/>
<dbReference type="MGI" id="MGI:99137">
    <property type="gene designation" value="Xrcc1"/>
</dbReference>
<dbReference type="VEuPathDB" id="HostDB:ENSMUSG00000051768"/>
<dbReference type="eggNOG" id="KOG3226">
    <property type="taxonomic scope" value="Eukaryota"/>
</dbReference>
<dbReference type="GeneTree" id="ENSGT00390000004140"/>
<dbReference type="HOGENOM" id="CLU_030026_0_0_1"/>
<dbReference type="InParanoid" id="Q60596"/>
<dbReference type="OMA" id="PEWIYAI"/>
<dbReference type="OrthoDB" id="25840at2759"/>
<dbReference type="PhylomeDB" id="Q60596"/>
<dbReference type="TreeFam" id="TF101201"/>
<dbReference type="Reactome" id="R-MMU-110381">
    <property type="pathway name" value="Resolution of AP sites via the single-nucleotide replacement pathway"/>
</dbReference>
<dbReference type="Reactome" id="R-MMU-5649702">
    <property type="pathway name" value="APEX1-Independent Resolution of AP Sites via the Single Nucleotide Replacement Pathway"/>
</dbReference>
<dbReference type="Reactome" id="R-MMU-5685939">
    <property type="pathway name" value="HDR through MMEJ (alt-NHEJ)"/>
</dbReference>
<dbReference type="Reactome" id="R-MMU-6782210">
    <property type="pathway name" value="Gap-filling DNA repair synthesis and ligation in TC-NER"/>
</dbReference>
<dbReference type="BioGRID-ORCS" id="22594">
    <property type="hits" value="17 hits in 117 CRISPR screens"/>
</dbReference>
<dbReference type="ChiTaRS" id="Xrcc1">
    <property type="organism name" value="mouse"/>
</dbReference>
<dbReference type="EvolutionaryTrace" id="Q60596"/>
<dbReference type="PRO" id="PR:Q60596"/>
<dbReference type="Proteomes" id="UP000000589">
    <property type="component" value="Chromosome 7"/>
</dbReference>
<dbReference type="RNAct" id="Q60596">
    <property type="molecule type" value="protein"/>
</dbReference>
<dbReference type="Bgee" id="ENSMUSG00000051768">
    <property type="expression patterns" value="Expressed in saccule of membranous labyrinth and 229 other cell types or tissues"/>
</dbReference>
<dbReference type="GO" id="GO:0000785">
    <property type="term" value="C:chromatin"/>
    <property type="evidence" value="ECO:0007669"/>
    <property type="project" value="Ensembl"/>
</dbReference>
<dbReference type="GO" id="GO:0000781">
    <property type="term" value="C:chromosome, telomeric region"/>
    <property type="evidence" value="ECO:0000314"/>
    <property type="project" value="BHF-UCL"/>
</dbReference>
<dbReference type="GO" id="GO:0070522">
    <property type="term" value="C:ERCC4-ERCC1 complex"/>
    <property type="evidence" value="ECO:0000314"/>
    <property type="project" value="BHF-UCL"/>
</dbReference>
<dbReference type="GO" id="GO:0005730">
    <property type="term" value="C:nucleolus"/>
    <property type="evidence" value="ECO:0007669"/>
    <property type="project" value="Ensembl"/>
</dbReference>
<dbReference type="GO" id="GO:0005654">
    <property type="term" value="C:nucleoplasm"/>
    <property type="evidence" value="ECO:0007669"/>
    <property type="project" value="Ensembl"/>
</dbReference>
<dbReference type="GO" id="GO:0090734">
    <property type="term" value="C:site of DNA damage"/>
    <property type="evidence" value="ECO:0007669"/>
    <property type="project" value="Ensembl"/>
</dbReference>
<dbReference type="GO" id="GO:0160002">
    <property type="term" value="F:ADP-D-ribose modification-dependent protein binding"/>
    <property type="evidence" value="ECO:0007669"/>
    <property type="project" value="Ensembl"/>
</dbReference>
<dbReference type="GO" id="GO:0019899">
    <property type="term" value="F:enzyme binding"/>
    <property type="evidence" value="ECO:0007669"/>
    <property type="project" value="Ensembl"/>
</dbReference>
<dbReference type="GO" id="GO:0032356">
    <property type="term" value="F:oxidized DNA binding"/>
    <property type="evidence" value="ECO:0007669"/>
    <property type="project" value="Ensembl"/>
</dbReference>
<dbReference type="GO" id="GO:0072572">
    <property type="term" value="F:poly-ADP-D-ribose binding"/>
    <property type="evidence" value="ECO:0007669"/>
    <property type="project" value="Ensembl"/>
</dbReference>
<dbReference type="GO" id="GO:0006284">
    <property type="term" value="P:base-excision repair"/>
    <property type="evidence" value="ECO:0007669"/>
    <property type="project" value="Ensembl"/>
</dbReference>
<dbReference type="GO" id="GO:0006281">
    <property type="term" value="P:DNA repair"/>
    <property type="evidence" value="ECO:0000315"/>
    <property type="project" value="MGI"/>
</dbReference>
<dbReference type="GO" id="GO:0006303">
    <property type="term" value="P:double-strand break repair via nonhomologous end joining"/>
    <property type="evidence" value="ECO:0000315"/>
    <property type="project" value="BHF-UCL"/>
</dbReference>
<dbReference type="GO" id="GO:0021766">
    <property type="term" value="P:hippocampus development"/>
    <property type="evidence" value="ECO:0000315"/>
    <property type="project" value="MGI"/>
</dbReference>
<dbReference type="GO" id="GO:1905765">
    <property type="term" value="P:negative regulation of protection from non-homologous end joining at telomere"/>
    <property type="evidence" value="ECO:0000315"/>
    <property type="project" value="BHF-UCL"/>
</dbReference>
<dbReference type="GO" id="GO:1905051">
    <property type="term" value="P:regulation of base-excision repair"/>
    <property type="evidence" value="ECO:0007669"/>
    <property type="project" value="Ensembl"/>
</dbReference>
<dbReference type="GO" id="GO:0033194">
    <property type="term" value="P:response to hydroperoxide"/>
    <property type="evidence" value="ECO:0007669"/>
    <property type="project" value="Ensembl"/>
</dbReference>
<dbReference type="GO" id="GO:0000012">
    <property type="term" value="P:single strand break repair"/>
    <property type="evidence" value="ECO:0000315"/>
    <property type="project" value="UniProtKB"/>
</dbReference>
<dbReference type="GO" id="GO:0061819">
    <property type="term" value="P:telomeric DNA-containing double minutes formation"/>
    <property type="evidence" value="ECO:0000315"/>
    <property type="project" value="BHF-UCL"/>
</dbReference>
<dbReference type="CDD" id="cd17725">
    <property type="entry name" value="BRCT_XRCC1_rpt1"/>
    <property type="match status" value="1"/>
</dbReference>
<dbReference type="CDD" id="cd17707">
    <property type="entry name" value="BRCT_XRCC1_rpt2"/>
    <property type="match status" value="1"/>
</dbReference>
<dbReference type="FunFam" id="2.60.120.260:FF:000025">
    <property type="entry name" value="DNA repair protein XRCC1 isoform X1"/>
    <property type="match status" value="1"/>
</dbReference>
<dbReference type="FunFam" id="3.40.50.10190:FF:000008">
    <property type="entry name" value="X-ray repair cross complementing 1"/>
    <property type="match status" value="1"/>
</dbReference>
<dbReference type="FunFam" id="3.40.50.10190:FF:000012">
    <property type="entry name" value="X-ray repair cross complementing 1"/>
    <property type="match status" value="1"/>
</dbReference>
<dbReference type="Gene3D" id="3.40.50.10190">
    <property type="entry name" value="BRCT domain"/>
    <property type="match status" value="2"/>
</dbReference>
<dbReference type="Gene3D" id="2.60.120.260">
    <property type="entry name" value="Galactose-binding domain-like"/>
    <property type="match status" value="1"/>
</dbReference>
<dbReference type="InterPro" id="IPR001357">
    <property type="entry name" value="BRCT_dom"/>
</dbReference>
<dbReference type="InterPro" id="IPR036420">
    <property type="entry name" value="BRCT_dom_sf"/>
</dbReference>
<dbReference type="InterPro" id="IPR045080">
    <property type="entry name" value="BRCT_XRCC1_rpt1"/>
</dbReference>
<dbReference type="InterPro" id="IPR008979">
    <property type="entry name" value="Galactose-bd-like_sf"/>
</dbReference>
<dbReference type="InterPro" id="IPR002706">
    <property type="entry name" value="Xrcc1_N"/>
</dbReference>
<dbReference type="PANTHER" id="PTHR11370:SF5">
    <property type="entry name" value="DNA REPAIR PROTEIN XRCC1"/>
    <property type="match status" value="1"/>
</dbReference>
<dbReference type="PANTHER" id="PTHR11370">
    <property type="entry name" value="DNA-REPAIR PROTEIN XRCC1"/>
    <property type="match status" value="1"/>
</dbReference>
<dbReference type="Pfam" id="PF00533">
    <property type="entry name" value="BRCT"/>
    <property type="match status" value="1"/>
</dbReference>
<dbReference type="Pfam" id="PF16589">
    <property type="entry name" value="BRCT_2"/>
    <property type="match status" value="1"/>
</dbReference>
<dbReference type="Pfam" id="PF01834">
    <property type="entry name" value="XRCC1_N"/>
    <property type="match status" value="1"/>
</dbReference>
<dbReference type="SMART" id="SM00292">
    <property type="entry name" value="BRCT"/>
    <property type="match status" value="2"/>
</dbReference>
<dbReference type="SUPFAM" id="SSF52113">
    <property type="entry name" value="BRCT domain"/>
    <property type="match status" value="2"/>
</dbReference>
<dbReference type="SUPFAM" id="SSF49785">
    <property type="entry name" value="Galactose-binding domain-like"/>
    <property type="match status" value="1"/>
</dbReference>
<dbReference type="PROSITE" id="PS50172">
    <property type="entry name" value="BRCT"/>
    <property type="match status" value="2"/>
</dbReference>
<gene>
    <name type="primary">Xrcc1</name>
    <name type="synonym">Xrcc-1</name>
</gene>
<accession>Q60596</accession>
<accession>Q3THC5</accession>
<accession>Q5U435</accession>
<accession>Q7TNQ5</accession>
<protein>
    <recommendedName>
        <fullName>DNA repair protein XRCC1</fullName>
    </recommendedName>
    <alternativeName>
        <fullName>X-ray repair cross-complementing protein 1</fullName>
    </alternativeName>
</protein>
<name>XRCC1_MOUSE</name>
<sequence>MPEISLRHVVSCSSQDSTHCAENLLKADTYRKWRAAKAGEKTISVVLQLEKEEQIHSVDIGNDGSAFVEVLVGSSAGGATAGEQDYEVLLVTSSFMSPSESRSGSNPNRVRIFGPDKLVRAAAEKRWDRVKIVCSQPYSKDSPYGLSFVKFHSPPDKDEAEATSQKVTVTKLGQFRVKEEDDSANSLKPGALFFSRINKTSSASTSDPAGPSYAAATLQASSAASSASPVPKVVGSSSKPQEPPKGKRKLDLSLEDRKPPSKPSAGPSTLKRPKLSVPSRTPAAAPASTPAQRAVPGKPRGEGTEPRGARTGPQELGKILQGVVVVLSGFQNPFRSELRDKALELGAKYRPDWTPDSTHLICAFANTPKYSQVLGLGGRIVRKEWVLDCHHMRRRLPSRRYLMAGLGSSSEDEGDSHSESGEDEAPKLPQKRPQPKAKTQAAGPSSPPRPPTPKETKAPSPGPQDNSDTEGEESEGRDNGAEDSGDTEDELRRVAKQREQRQPPAPEENGEDPYAGSTDENTDSETPSEADLPIPELPDFFEGKHFFLYGEFPGDERRRLIRYVTAFNGELEDYMNERVQFVITAQEWDPNFEEALMENPSLAFVRPRWIYSCNEKQKLLPHQLYGVVPQA</sequence>
<keyword id="KW-0002">3D-structure</keyword>
<keyword id="KW-0158">Chromosome</keyword>
<keyword id="KW-0227">DNA damage</keyword>
<keyword id="KW-0234">DNA repair</keyword>
<keyword id="KW-1017">Isopeptide bond</keyword>
<keyword id="KW-0539">Nucleus</keyword>
<keyword id="KW-0597">Phosphoprotein</keyword>
<keyword id="KW-1185">Reference proteome</keyword>
<keyword id="KW-0677">Repeat</keyword>
<keyword id="KW-0832">Ubl conjugation</keyword>
<feature type="chain" id="PRO_0000066045" description="DNA repair protein XRCC1">
    <location>
        <begin position="1"/>
        <end position="631"/>
    </location>
</feature>
<feature type="domain" description="BRCT 1" evidence="2">
    <location>
        <begin position="315"/>
        <end position="403"/>
    </location>
</feature>
<feature type="domain" description="BRCT 2" evidence="2">
    <location>
        <begin position="536"/>
        <end position="627"/>
    </location>
</feature>
<feature type="region of interest" description="Disordered" evidence="3">
    <location>
        <begin position="225"/>
        <end position="315"/>
    </location>
</feature>
<feature type="region of interest" description="Disordered" evidence="3">
    <location>
        <begin position="405"/>
        <end position="537"/>
    </location>
</feature>
<feature type="compositionally biased region" description="Low complexity" evidence="3">
    <location>
        <begin position="225"/>
        <end position="238"/>
    </location>
</feature>
<feature type="compositionally biased region" description="Basic and acidic residues" evidence="3">
    <location>
        <begin position="242"/>
        <end position="259"/>
    </location>
</feature>
<feature type="compositionally biased region" description="Low complexity" evidence="3">
    <location>
        <begin position="278"/>
        <end position="294"/>
    </location>
</feature>
<feature type="compositionally biased region" description="Basic and acidic residues" evidence="3">
    <location>
        <begin position="299"/>
        <end position="308"/>
    </location>
</feature>
<feature type="compositionally biased region" description="Basic and acidic residues" evidence="3">
    <location>
        <begin position="415"/>
        <end position="426"/>
    </location>
</feature>
<feature type="compositionally biased region" description="Basic and acidic residues" evidence="3">
    <location>
        <begin position="490"/>
        <end position="501"/>
    </location>
</feature>
<feature type="modified residue" description="Phosphoserine" evidence="1">
    <location>
        <position position="142"/>
    </location>
</feature>
<feature type="modified residue" description="Phosphothreonine" evidence="1">
    <location>
        <position position="200"/>
    </location>
</feature>
<feature type="modified residue" description="Phosphoserine" evidence="1">
    <location>
        <position position="201"/>
    </location>
</feature>
<feature type="modified residue" description="Phosphoserine" evidence="1">
    <location>
        <position position="206"/>
    </location>
</feature>
<feature type="modified residue" description="Phosphoserine" evidence="1">
    <location>
        <position position="228"/>
    </location>
</feature>
<feature type="modified residue" description="Phosphoserine" evidence="1">
    <location>
        <position position="261"/>
    </location>
</feature>
<feature type="modified residue" description="Phosphothreonine" evidence="1">
    <location>
        <position position="281"/>
    </location>
</feature>
<feature type="modified residue" description="Phosphoserine" evidence="1">
    <location>
        <position position="371"/>
    </location>
</feature>
<feature type="modified residue" description="Phosphoserine" evidence="1">
    <location>
        <position position="408"/>
    </location>
</feature>
<feature type="modified residue" description="Phosphoserine" evidence="1">
    <location>
        <position position="409"/>
    </location>
</feature>
<feature type="modified residue" description="Phosphoserine" evidence="1">
    <location>
        <position position="410"/>
    </location>
</feature>
<feature type="modified residue" description="Phosphoserine" evidence="1">
    <location>
        <position position="445"/>
    </location>
</feature>
<feature type="modified residue" description="Phosphoserine" evidence="7">
    <location>
        <position position="446"/>
    </location>
</feature>
<feature type="modified residue" description="Phosphothreonine" evidence="6 7 8">
    <location>
        <position position="452"/>
    </location>
</feature>
<feature type="modified residue" description="Phosphothreonine" evidence="1">
    <location>
        <position position="456"/>
    </location>
</feature>
<feature type="modified residue" description="Phosphoserine" evidence="1">
    <location>
        <position position="460"/>
    </location>
</feature>
<feature type="modified residue" description="Phosphoserine" evidence="1">
    <location>
        <position position="484"/>
    </location>
</feature>
<feature type="modified residue" description="Phosphothreonine" evidence="1">
    <location>
        <position position="487"/>
    </location>
</feature>
<feature type="modified residue" description="Phosphoserine" evidence="1">
    <location>
        <position position="517"/>
    </location>
</feature>
<feature type="modified residue" description="Phosphothreonine" evidence="1">
    <location>
        <position position="518"/>
    </location>
</feature>
<feature type="modified residue" description="Phosphothreonine" evidence="1">
    <location>
        <position position="522"/>
    </location>
</feature>
<feature type="cross-link" description="Glycyl lysine isopeptide (Lys-Gly) (interchain with G-Cter in SUMO1); alternate" evidence="1">
    <location>
        <position position="178"/>
    </location>
</feature>
<feature type="cross-link" description="Glycyl lysine isopeptide (Lys-Gly) (interchain with G-Cter in SUMO2); alternate" evidence="1">
    <location>
        <position position="178"/>
    </location>
</feature>
<feature type="sequence conflict" description="In Ref. 3; AAH85281." evidence="5" ref="3">
    <original>D</original>
    <variation>G</variation>
    <location>
        <position position="28"/>
    </location>
</feature>
<feature type="sequence conflict" description="In Ref. 2; BAE40272." evidence="5" ref="2">
    <original>V</original>
    <variation>L</variation>
    <location>
        <position position="68"/>
    </location>
</feature>
<feature type="sequence conflict" description="In Ref. 3; AAH85281." evidence="5" ref="3">
    <original>N</original>
    <variation>S</variation>
    <location>
        <position position="108"/>
    </location>
</feature>
<feature type="sequence conflict" description="In Ref. 3; AAH85281." evidence="5" ref="3">
    <original>L</original>
    <variation>F</variation>
    <location>
        <position position="172"/>
    </location>
</feature>
<feature type="sequence conflict" description="In Ref. 3; AAH85281." evidence="5" ref="3">
    <original>I</original>
    <variation>V</variation>
    <location>
        <position position="197"/>
    </location>
</feature>
<feature type="sequence conflict" description="In Ref. 2; BAE40272." evidence="5" ref="2">
    <original>P</original>
    <variation>H</variation>
    <location>
        <position position="263"/>
    </location>
</feature>
<feature type="sequence conflict" description="In Ref. 1; AAA93115." evidence="5" ref="1">
    <original>V</original>
    <variation>I</variation>
    <location>
        <position position="295"/>
    </location>
</feature>
<feature type="sequence conflict" description="In Ref. 2; BAE40272." evidence="5" ref="2">
    <original>R</original>
    <variation>G</variation>
    <location>
        <position position="379"/>
    </location>
</feature>
<feature type="sequence conflict" description="In Ref. 1; AAA93115." evidence="5" ref="1">
    <original>H</original>
    <variation>R</variation>
    <location>
        <position position="391"/>
    </location>
</feature>
<feature type="sequence conflict" description="In Ref. 3; AAH85281." evidence="5" ref="3">
    <original>V</original>
    <variation>A</variation>
    <location>
        <position position="582"/>
    </location>
</feature>
<feature type="turn" evidence="9">
    <location>
        <begin position="540"/>
        <end position="543"/>
    </location>
</feature>
<feature type="strand" evidence="9">
    <location>
        <begin position="545"/>
        <end position="550"/>
    </location>
</feature>
<feature type="helix" evidence="9">
    <location>
        <begin position="556"/>
        <end position="566"/>
    </location>
</feature>
<feature type="strand" evidence="10">
    <location>
        <begin position="573"/>
        <end position="575"/>
    </location>
</feature>
<feature type="strand" evidence="9">
    <location>
        <begin position="581"/>
        <end position="586"/>
    </location>
</feature>
<feature type="helix" evidence="9">
    <location>
        <begin position="590"/>
        <end position="596"/>
    </location>
</feature>
<feature type="strand" evidence="9">
    <location>
        <begin position="603"/>
        <end position="605"/>
    </location>
</feature>
<feature type="helix" evidence="9">
    <location>
        <begin position="607"/>
        <end position="616"/>
    </location>
</feature>
<feature type="helix" evidence="9">
    <location>
        <begin position="622"/>
        <end position="625"/>
    </location>
</feature>
<comment type="function">
    <text evidence="1 4">Scaffold protein involved in DNA single-strand break repair by mediating the assembly of DNA break repair protein complexes (By similarity). Negatively regulates ADP-ribosyltransferase activity of PARP1 during base-excision repair in order to prevent excessive PARP1 activity (PubMed:28002403). Recognizes and binds poly-ADP-ribose chains: specifically binds auto-poly-ADP-ribosylated PARP1, limiting its activity (By similarity).</text>
</comment>
<comment type="subunit">
    <text evidence="1">Homodimer. Interacts with polynucleotide kinase (PNK), DNA polymerase-beta (POLB) and DNA ligase III (LIG3). Interacts with APTX and APLF. Interacts with APEX1; the interaction is induced by SIRT1 and increases with the acetylated form of APEX1. Interacts with (poly-ADP-ribosylated) PARP1.</text>
</comment>
<comment type="subcellular location">
    <subcellularLocation>
        <location evidence="1">Nucleus</location>
    </subcellularLocation>
    <subcellularLocation>
        <location evidence="1">Chromosome</location>
    </subcellularLocation>
    <text evidence="1">Moves from the nucleoli to the global nuclear chromatin upon DNA damage. Recruited to DNA damage sites fowwing interaction with poly-ADP-ribose chains.</text>
</comment>
<comment type="PTM">
    <text evidence="1">Phosphorylation of Ser-371 causes dimer dissociation. Phosphorylation by CK2 promotes interaction with APTX and APLF (By similarity).</text>
</comment>
<comment type="PTM">
    <text evidence="1">Sumoylated.</text>
</comment>
<comment type="disruption phenotype">
    <text evidence="4">Embryonic lethal. Conditional knockout in brain causes cerebellar histopathology including increased apoptosis of cerebellar granule neurons, reduced numbers of cerebellar interneurons and decreased electrophysiological spike activity in Purkinje cells. Mutant mice exhibit cerebellar ataxia and elevated levels of ADP-ribose in cerebellum. Double knockout with PARP1 restores the normal interneuron density and ADP-ribose levels, reducing cerebellar ataxia in comparison to the single XRCC1 knockout mice.</text>
</comment>
<evidence type="ECO:0000250" key="1">
    <source>
        <dbReference type="UniProtKB" id="P18887"/>
    </source>
</evidence>
<evidence type="ECO:0000255" key="2">
    <source>
        <dbReference type="PROSITE-ProRule" id="PRU00033"/>
    </source>
</evidence>
<evidence type="ECO:0000256" key="3">
    <source>
        <dbReference type="SAM" id="MobiDB-lite"/>
    </source>
</evidence>
<evidence type="ECO:0000269" key="4">
    <source>
    </source>
</evidence>
<evidence type="ECO:0000305" key="5"/>
<evidence type="ECO:0007744" key="6">
    <source>
    </source>
</evidence>
<evidence type="ECO:0007744" key="7">
    <source>
    </source>
</evidence>
<evidence type="ECO:0007744" key="8">
    <source>
    </source>
</evidence>
<evidence type="ECO:0007829" key="9">
    <source>
        <dbReference type="PDB" id="3PC6"/>
    </source>
</evidence>
<evidence type="ECO:0007829" key="10">
    <source>
        <dbReference type="PDB" id="3PC8"/>
    </source>
</evidence>
<organism>
    <name type="scientific">Mus musculus</name>
    <name type="common">Mouse</name>
    <dbReference type="NCBI Taxonomy" id="10090"/>
    <lineage>
        <taxon>Eukaryota</taxon>
        <taxon>Metazoa</taxon>
        <taxon>Chordata</taxon>
        <taxon>Craniata</taxon>
        <taxon>Vertebrata</taxon>
        <taxon>Euteleostomi</taxon>
        <taxon>Mammalia</taxon>
        <taxon>Eutheria</taxon>
        <taxon>Euarchontoglires</taxon>
        <taxon>Glires</taxon>
        <taxon>Rodentia</taxon>
        <taxon>Myomorpha</taxon>
        <taxon>Muroidea</taxon>
        <taxon>Muridae</taxon>
        <taxon>Murinae</taxon>
        <taxon>Mus</taxon>
        <taxon>Mus</taxon>
    </lineage>
</organism>
<proteinExistence type="evidence at protein level"/>